<comment type="function">
    <text>Produces ATP from ADP in the presence of a proton gradient across the membrane. The alpha chain is a regulatory subunit.</text>
</comment>
<comment type="catalytic activity">
    <reaction evidence="1">
        <text>ATP + H2O + 4 H(+)(in) = ADP + phosphate + 5 H(+)(out)</text>
        <dbReference type="Rhea" id="RHEA:57720"/>
        <dbReference type="ChEBI" id="CHEBI:15377"/>
        <dbReference type="ChEBI" id="CHEBI:15378"/>
        <dbReference type="ChEBI" id="CHEBI:30616"/>
        <dbReference type="ChEBI" id="CHEBI:43474"/>
        <dbReference type="ChEBI" id="CHEBI:456216"/>
        <dbReference type="EC" id="7.1.2.2"/>
    </reaction>
</comment>
<comment type="subunit">
    <text evidence="1">F-type ATPases have 2 components, CF(1) - the catalytic core - and CF(0) - the membrane proton channel. CF(1) has five subunits: alpha(3), beta(3), gamma(1), delta(1), epsilon(1). CF(0) has four main subunits: a, b, b' and c.</text>
</comment>
<comment type="subcellular location">
    <subcellularLocation>
        <location evidence="1">Plastid</location>
        <location evidence="1">Chloroplast thylakoid membrane</location>
        <topology evidence="1">Peripheral membrane protein</topology>
    </subcellularLocation>
</comment>
<comment type="similarity">
    <text evidence="1">Belongs to the ATPase alpha/beta chains family.</text>
</comment>
<geneLocation type="chloroplast"/>
<proteinExistence type="inferred from homology"/>
<keyword id="KW-0066">ATP synthesis</keyword>
<keyword id="KW-0067">ATP-binding</keyword>
<keyword id="KW-0139">CF(1)</keyword>
<keyword id="KW-0150">Chloroplast</keyword>
<keyword id="KW-0375">Hydrogen ion transport</keyword>
<keyword id="KW-0406">Ion transport</keyword>
<keyword id="KW-0472">Membrane</keyword>
<keyword id="KW-0547">Nucleotide-binding</keyword>
<keyword id="KW-0934">Plastid</keyword>
<keyword id="KW-0793">Thylakoid</keyword>
<keyword id="KW-1278">Translocase</keyword>
<keyword id="KW-0813">Transport</keyword>
<organism>
    <name type="scientific">Pisum sativum</name>
    <name type="common">Garden pea</name>
    <name type="synonym">Lathyrus oleraceus</name>
    <dbReference type="NCBI Taxonomy" id="3888"/>
    <lineage>
        <taxon>Eukaryota</taxon>
        <taxon>Viridiplantae</taxon>
        <taxon>Streptophyta</taxon>
        <taxon>Embryophyta</taxon>
        <taxon>Tracheophyta</taxon>
        <taxon>Spermatophyta</taxon>
        <taxon>Magnoliopsida</taxon>
        <taxon>eudicotyledons</taxon>
        <taxon>Gunneridae</taxon>
        <taxon>Pentapetalae</taxon>
        <taxon>rosids</taxon>
        <taxon>fabids</taxon>
        <taxon>Fabales</taxon>
        <taxon>Fabaceae</taxon>
        <taxon>Papilionoideae</taxon>
        <taxon>50 kb inversion clade</taxon>
        <taxon>NPAAA clade</taxon>
        <taxon>Hologalegina</taxon>
        <taxon>IRL clade</taxon>
        <taxon>Fabeae</taxon>
        <taxon>Pisum</taxon>
    </lineage>
</organism>
<feature type="chain" id="PRO_0000144388" description="ATP synthase subunit alpha, chloroplastic">
    <location>
        <begin position="1"/>
        <end position="501"/>
    </location>
</feature>
<feature type="binding site" evidence="1">
    <location>
        <begin position="170"/>
        <end position="177"/>
    </location>
    <ligand>
        <name>ATP</name>
        <dbReference type="ChEBI" id="CHEBI:30616"/>
    </ligand>
</feature>
<feature type="site" description="Required for activity" evidence="1">
    <location>
        <position position="363"/>
    </location>
</feature>
<gene>
    <name evidence="1" type="primary">atpA</name>
</gene>
<name>ATPA_PEA</name>
<sequence>MVTSRADEISQIIRKRIEQYNTEVKIVNTGTVLQVGDGIARIYGLDDVMAGELVEFKEGTVGIALNLESKNVGVVLMGDGLMIQEGSSVKATGRIAQIPVSEGYLGRVVNALAKPIDGRGEISTSESRLIESPAPGIISRRSVYEPLQTGLIAIDSMIPIGRGQRELIIGDRQTGKTAVATDTILNQQGQNLVCVYVAIGQKASSVAQVVTTLQERGAMEYTIVVAETADSPATLQYLAPYTGAALAEYFMYRERHTLIIYDDPSKHAQAYRQMSLLLRRPPGREAYPGDVFYLHSRLLERVAKLSSQLGEGSMTALPIVETQSGDVSAYIPTNVISITDGQIFLSADLFNAGIRPAINVGISVSRVGSAAQIKAMKQVAGKLKLELAQFAELEAFAQFASDLDKATQNQLARGQRLRELLKQSQSAPLTVEEQIITIYTGTNSYLDSVEIAQVRKFIVELRAYLKTKKPKFNEIISSTKTFTGEAEAILKEAIQEQMELF</sequence>
<accession>P08215</accession>
<evidence type="ECO:0000255" key="1">
    <source>
        <dbReference type="HAMAP-Rule" id="MF_01346"/>
    </source>
</evidence>
<dbReference type="EC" id="7.1.2.2" evidence="1"/>
<dbReference type="EMBL" id="X05917">
    <property type="protein sequence ID" value="CAA29352.1"/>
    <property type="molecule type" value="Genomic_DNA"/>
</dbReference>
<dbReference type="PIR" id="S00588">
    <property type="entry name" value="PWPMA"/>
</dbReference>
<dbReference type="RefSeq" id="YP_003587561.1">
    <property type="nucleotide sequence ID" value="NC_014057.1"/>
</dbReference>
<dbReference type="SMR" id="P08215"/>
<dbReference type="GeneID" id="9073113"/>
<dbReference type="GO" id="GO:0009535">
    <property type="term" value="C:chloroplast thylakoid membrane"/>
    <property type="evidence" value="ECO:0007669"/>
    <property type="project" value="UniProtKB-SubCell"/>
</dbReference>
<dbReference type="GO" id="GO:0045259">
    <property type="term" value="C:proton-transporting ATP synthase complex"/>
    <property type="evidence" value="ECO:0007669"/>
    <property type="project" value="UniProtKB-KW"/>
</dbReference>
<dbReference type="GO" id="GO:0043531">
    <property type="term" value="F:ADP binding"/>
    <property type="evidence" value="ECO:0007669"/>
    <property type="project" value="TreeGrafter"/>
</dbReference>
<dbReference type="GO" id="GO:0005524">
    <property type="term" value="F:ATP binding"/>
    <property type="evidence" value="ECO:0007669"/>
    <property type="project" value="UniProtKB-UniRule"/>
</dbReference>
<dbReference type="GO" id="GO:0046933">
    <property type="term" value="F:proton-transporting ATP synthase activity, rotational mechanism"/>
    <property type="evidence" value="ECO:0007669"/>
    <property type="project" value="UniProtKB-UniRule"/>
</dbReference>
<dbReference type="CDD" id="cd18113">
    <property type="entry name" value="ATP-synt_F1_alpha_C"/>
    <property type="match status" value="1"/>
</dbReference>
<dbReference type="CDD" id="cd18116">
    <property type="entry name" value="ATP-synt_F1_alpha_N"/>
    <property type="match status" value="1"/>
</dbReference>
<dbReference type="CDD" id="cd01132">
    <property type="entry name" value="F1-ATPase_alpha_CD"/>
    <property type="match status" value="1"/>
</dbReference>
<dbReference type="FunFam" id="1.20.150.20:FF:000001">
    <property type="entry name" value="ATP synthase subunit alpha"/>
    <property type="match status" value="1"/>
</dbReference>
<dbReference type="FunFam" id="2.40.30.20:FF:000001">
    <property type="entry name" value="ATP synthase subunit alpha"/>
    <property type="match status" value="1"/>
</dbReference>
<dbReference type="FunFam" id="3.40.50.300:FF:000002">
    <property type="entry name" value="ATP synthase subunit alpha"/>
    <property type="match status" value="1"/>
</dbReference>
<dbReference type="Gene3D" id="2.40.30.20">
    <property type="match status" value="1"/>
</dbReference>
<dbReference type="Gene3D" id="1.20.150.20">
    <property type="entry name" value="ATP synthase alpha/beta chain, C-terminal domain"/>
    <property type="match status" value="1"/>
</dbReference>
<dbReference type="Gene3D" id="3.40.50.300">
    <property type="entry name" value="P-loop containing nucleotide triphosphate hydrolases"/>
    <property type="match status" value="1"/>
</dbReference>
<dbReference type="HAMAP" id="MF_01346">
    <property type="entry name" value="ATP_synth_alpha_bact"/>
    <property type="match status" value="1"/>
</dbReference>
<dbReference type="InterPro" id="IPR023366">
    <property type="entry name" value="ATP_synth_asu-like_sf"/>
</dbReference>
<dbReference type="InterPro" id="IPR000793">
    <property type="entry name" value="ATP_synth_asu_C"/>
</dbReference>
<dbReference type="InterPro" id="IPR038376">
    <property type="entry name" value="ATP_synth_asu_C_sf"/>
</dbReference>
<dbReference type="InterPro" id="IPR033732">
    <property type="entry name" value="ATP_synth_F1_a_nt-bd_dom"/>
</dbReference>
<dbReference type="InterPro" id="IPR005294">
    <property type="entry name" value="ATP_synth_F1_asu"/>
</dbReference>
<dbReference type="InterPro" id="IPR020003">
    <property type="entry name" value="ATPase_a/bsu_AS"/>
</dbReference>
<dbReference type="InterPro" id="IPR004100">
    <property type="entry name" value="ATPase_F1/V1/A1_a/bsu_N"/>
</dbReference>
<dbReference type="InterPro" id="IPR036121">
    <property type="entry name" value="ATPase_F1/V1/A1_a/bsu_N_sf"/>
</dbReference>
<dbReference type="InterPro" id="IPR000194">
    <property type="entry name" value="ATPase_F1/V1/A1_a/bsu_nucl-bd"/>
</dbReference>
<dbReference type="InterPro" id="IPR027417">
    <property type="entry name" value="P-loop_NTPase"/>
</dbReference>
<dbReference type="NCBIfam" id="TIGR00962">
    <property type="entry name" value="atpA"/>
    <property type="match status" value="1"/>
</dbReference>
<dbReference type="NCBIfam" id="NF009884">
    <property type="entry name" value="PRK13343.1"/>
    <property type="match status" value="1"/>
</dbReference>
<dbReference type="PANTHER" id="PTHR48082">
    <property type="entry name" value="ATP SYNTHASE SUBUNIT ALPHA, MITOCHONDRIAL"/>
    <property type="match status" value="1"/>
</dbReference>
<dbReference type="PANTHER" id="PTHR48082:SF2">
    <property type="entry name" value="ATP SYNTHASE SUBUNIT ALPHA, MITOCHONDRIAL"/>
    <property type="match status" value="1"/>
</dbReference>
<dbReference type="Pfam" id="PF00006">
    <property type="entry name" value="ATP-synt_ab"/>
    <property type="match status" value="1"/>
</dbReference>
<dbReference type="Pfam" id="PF00306">
    <property type="entry name" value="ATP-synt_ab_C"/>
    <property type="match status" value="1"/>
</dbReference>
<dbReference type="Pfam" id="PF02874">
    <property type="entry name" value="ATP-synt_ab_N"/>
    <property type="match status" value="1"/>
</dbReference>
<dbReference type="PIRSF" id="PIRSF039088">
    <property type="entry name" value="F_ATPase_subunit_alpha"/>
    <property type="match status" value="1"/>
</dbReference>
<dbReference type="SUPFAM" id="SSF47917">
    <property type="entry name" value="C-terminal domain of alpha and beta subunits of F1 ATP synthase"/>
    <property type="match status" value="1"/>
</dbReference>
<dbReference type="SUPFAM" id="SSF50615">
    <property type="entry name" value="N-terminal domain of alpha and beta subunits of F1 ATP synthase"/>
    <property type="match status" value="1"/>
</dbReference>
<dbReference type="SUPFAM" id="SSF52540">
    <property type="entry name" value="P-loop containing nucleoside triphosphate hydrolases"/>
    <property type="match status" value="1"/>
</dbReference>
<dbReference type="PROSITE" id="PS00152">
    <property type="entry name" value="ATPASE_ALPHA_BETA"/>
    <property type="match status" value="1"/>
</dbReference>
<protein>
    <recommendedName>
        <fullName evidence="1">ATP synthase subunit alpha, chloroplastic</fullName>
        <ecNumber evidence="1">7.1.2.2</ecNumber>
    </recommendedName>
    <alternativeName>
        <fullName evidence="1">ATP synthase F1 sector subunit alpha</fullName>
    </alternativeName>
    <alternativeName>
        <fullName evidence="1">F-ATPase subunit alpha</fullName>
    </alternativeName>
</protein>
<reference key="1">
    <citation type="journal article" date="1987" name="J. Mol. Biol.">
        <title>A gene cluster in the spinach and pea chloroplast genomes encoding one CF1 and three CF0 subunits of the H+-ATP synthase complex and the ribosomal protein S2.</title>
        <authorList>
            <person name="Hudson G.S."/>
            <person name="Mason J.G."/>
            <person name="Holton T.A."/>
            <person name="Koller B."/>
            <person name="Cox G.B."/>
            <person name="Whitfeld P.R."/>
            <person name="Bottomley W."/>
        </authorList>
    </citation>
    <scope>NUCLEOTIDE SEQUENCE [GENOMIC DNA]</scope>
</reference>